<gene>
    <name type="ordered locus">A2cp1_0165</name>
</gene>
<protein>
    <recommendedName>
        <fullName evidence="1">Nucleotide-binding protein A2cp1_0165</fullName>
    </recommendedName>
</protein>
<proteinExistence type="inferred from homology"/>
<name>Y165_ANAD2</name>
<accession>B8J8S6</accession>
<keyword id="KW-0067">ATP-binding</keyword>
<keyword id="KW-0342">GTP-binding</keyword>
<keyword id="KW-0547">Nucleotide-binding</keyword>
<dbReference type="EMBL" id="CP001359">
    <property type="protein sequence ID" value="ACL63524.1"/>
    <property type="molecule type" value="Genomic_DNA"/>
</dbReference>
<dbReference type="SMR" id="B8J8S6"/>
<dbReference type="KEGG" id="acp:A2cp1_0165"/>
<dbReference type="HOGENOM" id="CLU_059558_0_0_7"/>
<dbReference type="Proteomes" id="UP000007089">
    <property type="component" value="Chromosome"/>
</dbReference>
<dbReference type="GO" id="GO:0005524">
    <property type="term" value="F:ATP binding"/>
    <property type="evidence" value="ECO:0007669"/>
    <property type="project" value="UniProtKB-UniRule"/>
</dbReference>
<dbReference type="GO" id="GO:0016887">
    <property type="term" value="F:ATP hydrolysis activity"/>
    <property type="evidence" value="ECO:0007669"/>
    <property type="project" value="InterPro"/>
</dbReference>
<dbReference type="GO" id="GO:0005525">
    <property type="term" value="F:GTP binding"/>
    <property type="evidence" value="ECO:0007669"/>
    <property type="project" value="UniProtKB-UniRule"/>
</dbReference>
<dbReference type="Gene3D" id="3.40.50.300">
    <property type="entry name" value="P-loop containing nucleotide triphosphate hydrolases"/>
    <property type="match status" value="1"/>
</dbReference>
<dbReference type="HAMAP" id="MF_00636">
    <property type="entry name" value="RapZ_like"/>
    <property type="match status" value="1"/>
</dbReference>
<dbReference type="InterPro" id="IPR003593">
    <property type="entry name" value="AAA+_ATPase"/>
</dbReference>
<dbReference type="InterPro" id="IPR027417">
    <property type="entry name" value="P-loop_NTPase"/>
</dbReference>
<dbReference type="InterPro" id="IPR005337">
    <property type="entry name" value="RapZ-like"/>
</dbReference>
<dbReference type="InterPro" id="IPR053930">
    <property type="entry name" value="RapZ-like_N"/>
</dbReference>
<dbReference type="InterPro" id="IPR053931">
    <property type="entry name" value="RapZ_C"/>
</dbReference>
<dbReference type="NCBIfam" id="NF003828">
    <property type="entry name" value="PRK05416.1"/>
    <property type="match status" value="1"/>
</dbReference>
<dbReference type="PANTHER" id="PTHR30448">
    <property type="entry name" value="RNASE ADAPTER PROTEIN RAPZ"/>
    <property type="match status" value="1"/>
</dbReference>
<dbReference type="PANTHER" id="PTHR30448:SF0">
    <property type="entry name" value="RNASE ADAPTER PROTEIN RAPZ"/>
    <property type="match status" value="1"/>
</dbReference>
<dbReference type="Pfam" id="PF22740">
    <property type="entry name" value="PapZ_C"/>
    <property type="match status" value="1"/>
</dbReference>
<dbReference type="Pfam" id="PF03668">
    <property type="entry name" value="RapZ-like_N"/>
    <property type="match status" value="1"/>
</dbReference>
<dbReference type="PIRSF" id="PIRSF005052">
    <property type="entry name" value="P-loopkin"/>
    <property type="match status" value="1"/>
</dbReference>
<dbReference type="SMART" id="SM00382">
    <property type="entry name" value="AAA"/>
    <property type="match status" value="1"/>
</dbReference>
<dbReference type="SUPFAM" id="SSF52540">
    <property type="entry name" value="P-loop containing nucleoside triphosphate hydrolases"/>
    <property type="match status" value="1"/>
</dbReference>
<feature type="chain" id="PRO_1000147349" description="Nucleotide-binding protein A2cp1_0165">
    <location>
        <begin position="1"/>
        <end position="294"/>
    </location>
</feature>
<feature type="binding site" evidence="1">
    <location>
        <begin position="17"/>
        <end position="24"/>
    </location>
    <ligand>
        <name>ATP</name>
        <dbReference type="ChEBI" id="CHEBI:30616"/>
    </ligand>
</feature>
<feature type="binding site" evidence="1">
    <location>
        <begin position="68"/>
        <end position="71"/>
    </location>
    <ligand>
        <name>GTP</name>
        <dbReference type="ChEBI" id="CHEBI:37565"/>
    </ligand>
</feature>
<sequence>MTATVSHAGPQVVILTGVSGSGKSTALRALEDAGFYCVDNLPIVFLEKLLELSGHTAGEVSRMALVVDAREGRFLVEAPRIIRELRQKGADVEVLFLDASDEALVRRYSETRRRHPLAGEGGTVPDGIAAERLALADVRGIADEVIDTTTLNVHELKRLVTRRFVAGEGAKLGVTLVSFGFRFGIPTHADLVLDVRFLPNPFFVPELKPHPGTDPRVAEFVLGQADAKAFLERLTDLLGFLLPRYRNEGKSYLTIAIGCTGGKHRSVALAAALAERLEGSGQPVRLWHRDVEKE</sequence>
<comment type="function">
    <text evidence="1">Displays ATPase and GTPase activities.</text>
</comment>
<comment type="similarity">
    <text evidence="1">Belongs to the RapZ-like family.</text>
</comment>
<evidence type="ECO:0000255" key="1">
    <source>
        <dbReference type="HAMAP-Rule" id="MF_00636"/>
    </source>
</evidence>
<organism>
    <name type="scientific">Anaeromyxobacter dehalogenans (strain 2CP-1 / ATCC BAA-258)</name>
    <dbReference type="NCBI Taxonomy" id="455488"/>
    <lineage>
        <taxon>Bacteria</taxon>
        <taxon>Pseudomonadati</taxon>
        <taxon>Myxococcota</taxon>
        <taxon>Myxococcia</taxon>
        <taxon>Myxococcales</taxon>
        <taxon>Cystobacterineae</taxon>
        <taxon>Anaeromyxobacteraceae</taxon>
        <taxon>Anaeromyxobacter</taxon>
    </lineage>
</organism>
<reference key="1">
    <citation type="submission" date="2009-01" db="EMBL/GenBank/DDBJ databases">
        <title>Complete sequence of Anaeromyxobacter dehalogenans 2CP-1.</title>
        <authorList>
            <person name="Lucas S."/>
            <person name="Copeland A."/>
            <person name="Lapidus A."/>
            <person name="Glavina del Rio T."/>
            <person name="Dalin E."/>
            <person name="Tice H."/>
            <person name="Bruce D."/>
            <person name="Goodwin L."/>
            <person name="Pitluck S."/>
            <person name="Saunders E."/>
            <person name="Brettin T."/>
            <person name="Detter J.C."/>
            <person name="Han C."/>
            <person name="Larimer F."/>
            <person name="Land M."/>
            <person name="Hauser L."/>
            <person name="Kyrpides N."/>
            <person name="Ovchinnikova G."/>
            <person name="Beliaev A.S."/>
            <person name="Richardson P."/>
        </authorList>
    </citation>
    <scope>NUCLEOTIDE SEQUENCE [LARGE SCALE GENOMIC DNA]</scope>
    <source>
        <strain>2CP-1 / ATCC BAA-258</strain>
    </source>
</reference>